<protein>
    <recommendedName>
        <fullName evidence="1">Co-chaperonin GroES</fullName>
    </recommendedName>
    <alternativeName>
        <fullName evidence="1">10 kDa chaperonin</fullName>
    </alternativeName>
    <alternativeName>
        <fullName evidence="1">Chaperonin-10</fullName>
        <shortName evidence="1">Cpn10</shortName>
    </alternativeName>
</protein>
<gene>
    <name evidence="1" type="primary">groES</name>
    <name evidence="1" type="synonym">groS</name>
    <name type="ordered locus">Mpop_5326</name>
</gene>
<evidence type="ECO:0000255" key="1">
    <source>
        <dbReference type="HAMAP-Rule" id="MF_00580"/>
    </source>
</evidence>
<name>CH10_METPB</name>
<organism>
    <name type="scientific">Methylorubrum populi (strain ATCC BAA-705 / NCIMB 13946 / BJ001)</name>
    <name type="common">Methylobacterium populi</name>
    <dbReference type="NCBI Taxonomy" id="441620"/>
    <lineage>
        <taxon>Bacteria</taxon>
        <taxon>Pseudomonadati</taxon>
        <taxon>Pseudomonadota</taxon>
        <taxon>Alphaproteobacteria</taxon>
        <taxon>Hyphomicrobiales</taxon>
        <taxon>Methylobacteriaceae</taxon>
        <taxon>Methylorubrum</taxon>
    </lineage>
</organism>
<comment type="function">
    <text evidence="1">Together with the chaperonin GroEL, plays an essential role in assisting protein folding. The GroEL-GroES system forms a nano-cage that allows encapsulation of the non-native substrate proteins and provides a physical environment optimized to promote and accelerate protein folding. GroES binds to the apical surface of the GroEL ring, thereby capping the opening of the GroEL channel.</text>
</comment>
<comment type="subunit">
    <text evidence="1">Heptamer of 7 subunits arranged in a ring. Interacts with the chaperonin GroEL.</text>
</comment>
<comment type="subcellular location">
    <subcellularLocation>
        <location evidence="1">Cytoplasm</location>
    </subcellularLocation>
</comment>
<comment type="similarity">
    <text evidence="1">Belongs to the GroES chaperonin family.</text>
</comment>
<dbReference type="EMBL" id="CP001029">
    <property type="protein sequence ID" value="ACB83419.1"/>
    <property type="molecule type" value="Genomic_DNA"/>
</dbReference>
<dbReference type="RefSeq" id="WP_012457015.1">
    <property type="nucleotide sequence ID" value="NC_010725.1"/>
</dbReference>
<dbReference type="SMR" id="B1ZAU6"/>
<dbReference type="STRING" id="441620.Mpop_5326"/>
<dbReference type="KEGG" id="mpo:Mpop_5326"/>
<dbReference type="eggNOG" id="COG0234">
    <property type="taxonomic scope" value="Bacteria"/>
</dbReference>
<dbReference type="HOGENOM" id="CLU_132825_1_0_5"/>
<dbReference type="OrthoDB" id="9806791at2"/>
<dbReference type="Proteomes" id="UP000007136">
    <property type="component" value="Chromosome"/>
</dbReference>
<dbReference type="GO" id="GO:0005737">
    <property type="term" value="C:cytoplasm"/>
    <property type="evidence" value="ECO:0007669"/>
    <property type="project" value="UniProtKB-SubCell"/>
</dbReference>
<dbReference type="GO" id="GO:0005524">
    <property type="term" value="F:ATP binding"/>
    <property type="evidence" value="ECO:0007669"/>
    <property type="project" value="InterPro"/>
</dbReference>
<dbReference type="GO" id="GO:0046872">
    <property type="term" value="F:metal ion binding"/>
    <property type="evidence" value="ECO:0007669"/>
    <property type="project" value="TreeGrafter"/>
</dbReference>
<dbReference type="GO" id="GO:0044183">
    <property type="term" value="F:protein folding chaperone"/>
    <property type="evidence" value="ECO:0007669"/>
    <property type="project" value="InterPro"/>
</dbReference>
<dbReference type="GO" id="GO:0051087">
    <property type="term" value="F:protein-folding chaperone binding"/>
    <property type="evidence" value="ECO:0007669"/>
    <property type="project" value="TreeGrafter"/>
</dbReference>
<dbReference type="GO" id="GO:0051082">
    <property type="term" value="F:unfolded protein binding"/>
    <property type="evidence" value="ECO:0007669"/>
    <property type="project" value="TreeGrafter"/>
</dbReference>
<dbReference type="GO" id="GO:0051085">
    <property type="term" value="P:chaperone cofactor-dependent protein refolding"/>
    <property type="evidence" value="ECO:0007669"/>
    <property type="project" value="TreeGrafter"/>
</dbReference>
<dbReference type="CDD" id="cd00320">
    <property type="entry name" value="cpn10"/>
    <property type="match status" value="1"/>
</dbReference>
<dbReference type="FunFam" id="2.30.33.40:FF:000001">
    <property type="entry name" value="10 kDa chaperonin"/>
    <property type="match status" value="1"/>
</dbReference>
<dbReference type="Gene3D" id="2.30.33.40">
    <property type="entry name" value="GroES chaperonin"/>
    <property type="match status" value="1"/>
</dbReference>
<dbReference type="HAMAP" id="MF_00580">
    <property type="entry name" value="CH10"/>
    <property type="match status" value="1"/>
</dbReference>
<dbReference type="InterPro" id="IPR020818">
    <property type="entry name" value="Chaperonin_GroES"/>
</dbReference>
<dbReference type="InterPro" id="IPR037124">
    <property type="entry name" value="Chaperonin_GroES_sf"/>
</dbReference>
<dbReference type="InterPro" id="IPR018369">
    <property type="entry name" value="Chaprnonin_Cpn10_CS"/>
</dbReference>
<dbReference type="InterPro" id="IPR011032">
    <property type="entry name" value="GroES-like_sf"/>
</dbReference>
<dbReference type="NCBIfam" id="NF001527">
    <property type="entry name" value="PRK00364.1-2"/>
    <property type="match status" value="1"/>
</dbReference>
<dbReference type="NCBIfam" id="NF001529">
    <property type="entry name" value="PRK00364.1-5"/>
    <property type="match status" value="1"/>
</dbReference>
<dbReference type="NCBIfam" id="NF001531">
    <property type="entry name" value="PRK00364.2-2"/>
    <property type="match status" value="1"/>
</dbReference>
<dbReference type="NCBIfam" id="NF001533">
    <property type="entry name" value="PRK00364.2-4"/>
    <property type="match status" value="1"/>
</dbReference>
<dbReference type="NCBIfam" id="NF001534">
    <property type="entry name" value="PRK00364.2-5"/>
    <property type="match status" value="1"/>
</dbReference>
<dbReference type="PANTHER" id="PTHR10772">
    <property type="entry name" value="10 KDA HEAT SHOCK PROTEIN"/>
    <property type="match status" value="1"/>
</dbReference>
<dbReference type="PANTHER" id="PTHR10772:SF58">
    <property type="entry name" value="CO-CHAPERONIN GROES"/>
    <property type="match status" value="1"/>
</dbReference>
<dbReference type="Pfam" id="PF00166">
    <property type="entry name" value="Cpn10"/>
    <property type="match status" value="1"/>
</dbReference>
<dbReference type="PRINTS" id="PR00297">
    <property type="entry name" value="CHAPERONIN10"/>
</dbReference>
<dbReference type="SMART" id="SM00883">
    <property type="entry name" value="Cpn10"/>
    <property type="match status" value="1"/>
</dbReference>
<dbReference type="SUPFAM" id="SSF50129">
    <property type="entry name" value="GroES-like"/>
    <property type="match status" value="1"/>
</dbReference>
<dbReference type="PROSITE" id="PS00681">
    <property type="entry name" value="CHAPERONINS_CPN10"/>
    <property type="match status" value="1"/>
</dbReference>
<accession>B1ZAU6</accession>
<proteinExistence type="inferred from homology"/>
<reference key="1">
    <citation type="submission" date="2008-04" db="EMBL/GenBank/DDBJ databases">
        <title>Complete sequence of chromosome of Methylobacterium populi BJ001.</title>
        <authorList>
            <consortium name="US DOE Joint Genome Institute"/>
            <person name="Copeland A."/>
            <person name="Lucas S."/>
            <person name="Lapidus A."/>
            <person name="Glavina del Rio T."/>
            <person name="Dalin E."/>
            <person name="Tice H."/>
            <person name="Bruce D."/>
            <person name="Goodwin L."/>
            <person name="Pitluck S."/>
            <person name="Chertkov O."/>
            <person name="Brettin T."/>
            <person name="Detter J.C."/>
            <person name="Han C."/>
            <person name="Kuske C.R."/>
            <person name="Schmutz J."/>
            <person name="Larimer F."/>
            <person name="Land M."/>
            <person name="Hauser L."/>
            <person name="Kyrpides N."/>
            <person name="Mikhailova N."/>
            <person name="Marx C."/>
            <person name="Richardson P."/>
        </authorList>
    </citation>
    <scope>NUCLEOTIDE SEQUENCE [LARGE SCALE GENOMIC DNA]</scope>
    <source>
        <strain>ATCC BAA-705 / NCIMB 13946 / BJ001</strain>
    </source>
</reference>
<feature type="chain" id="PRO_1000129681" description="Co-chaperonin GroES">
    <location>
        <begin position="1"/>
        <end position="96"/>
    </location>
</feature>
<sequence length="96" mass="10525">MKFRPLHDRVVVRRIESEEKTKGGIIIPDTAKEKPQEGEIVAVGPGARDEQGRVNALDVKVGDRVLFGKWSGTEVKIDGQDLLIMKESDIMGVVAA</sequence>
<keyword id="KW-0143">Chaperone</keyword>
<keyword id="KW-0963">Cytoplasm</keyword>